<evidence type="ECO:0000255" key="1"/>
<evidence type="ECO:0000305" key="2"/>
<reference key="1">
    <citation type="journal article" date="1996" name="Science">
        <title>Complete genome sequence of the methanogenic archaeon, Methanococcus jannaschii.</title>
        <authorList>
            <person name="Bult C.J."/>
            <person name="White O."/>
            <person name="Olsen G.J."/>
            <person name="Zhou L."/>
            <person name="Fleischmann R.D."/>
            <person name="Sutton G.G."/>
            <person name="Blake J.A."/>
            <person name="FitzGerald L.M."/>
            <person name="Clayton R.A."/>
            <person name="Gocayne J.D."/>
            <person name="Kerlavage A.R."/>
            <person name="Dougherty B.A."/>
            <person name="Tomb J.-F."/>
            <person name="Adams M.D."/>
            <person name="Reich C.I."/>
            <person name="Overbeek R."/>
            <person name="Kirkness E.F."/>
            <person name="Weinstock K.G."/>
            <person name="Merrick J.M."/>
            <person name="Glodek A."/>
            <person name="Scott J.L."/>
            <person name="Geoghagen N.S.M."/>
            <person name="Weidman J.F."/>
            <person name="Fuhrmann J.L."/>
            <person name="Nguyen D."/>
            <person name="Utterback T.R."/>
            <person name="Kelley J.M."/>
            <person name="Peterson J.D."/>
            <person name="Sadow P.W."/>
            <person name="Hanna M.C."/>
            <person name="Cotton M.D."/>
            <person name="Roberts K.M."/>
            <person name="Hurst M.A."/>
            <person name="Kaine B.P."/>
            <person name="Borodovsky M."/>
            <person name="Klenk H.-P."/>
            <person name="Fraser C.M."/>
            <person name="Smith H.O."/>
            <person name="Woese C.R."/>
            <person name="Venter J.C."/>
        </authorList>
    </citation>
    <scope>NUCLEOTIDE SEQUENCE [LARGE SCALE GENOMIC DNA]</scope>
    <source>
        <strain>ATCC 43067 / DSM 2661 / JAL-1 / JCM 10045 / NBRC 100440</strain>
    </source>
</reference>
<accession>Q57898</accession>
<protein>
    <recommendedName>
        <fullName>Uncharacterized transporter MJ0456</fullName>
    </recommendedName>
</protein>
<keyword id="KW-1003">Cell membrane</keyword>
<keyword id="KW-0472">Membrane</keyword>
<keyword id="KW-1185">Reference proteome</keyword>
<keyword id="KW-0812">Transmembrane</keyword>
<keyword id="KW-1133">Transmembrane helix</keyword>
<keyword id="KW-0813">Transport</keyword>
<dbReference type="EMBL" id="L77117">
    <property type="protein sequence ID" value="AAB98444.1"/>
    <property type="molecule type" value="Genomic_DNA"/>
</dbReference>
<dbReference type="PIR" id="H64356">
    <property type="entry name" value="H64356"/>
</dbReference>
<dbReference type="RefSeq" id="WP_010869955.1">
    <property type="nucleotide sequence ID" value="NC_000909.1"/>
</dbReference>
<dbReference type="SMR" id="Q57898"/>
<dbReference type="FunCoup" id="Q57898">
    <property type="interactions" value="2"/>
</dbReference>
<dbReference type="STRING" id="243232.MJ_0456"/>
<dbReference type="PaxDb" id="243232-MJ_0456"/>
<dbReference type="EnsemblBacteria" id="AAB98444">
    <property type="protein sequence ID" value="AAB98444"/>
    <property type="gene ID" value="MJ_0456"/>
</dbReference>
<dbReference type="GeneID" id="1451317"/>
<dbReference type="KEGG" id="mja:MJ_0456"/>
<dbReference type="eggNOG" id="arCOG00237">
    <property type="taxonomic scope" value="Archaea"/>
</dbReference>
<dbReference type="HOGENOM" id="CLU_063025_1_0_2"/>
<dbReference type="InParanoid" id="Q57898"/>
<dbReference type="OrthoDB" id="86089at2157"/>
<dbReference type="PhylomeDB" id="Q57898"/>
<dbReference type="Proteomes" id="UP000000805">
    <property type="component" value="Chromosome"/>
</dbReference>
<dbReference type="GO" id="GO:0016020">
    <property type="term" value="C:membrane"/>
    <property type="evidence" value="ECO:0000318"/>
    <property type="project" value="GO_Central"/>
</dbReference>
<dbReference type="GO" id="GO:0005886">
    <property type="term" value="C:plasma membrane"/>
    <property type="evidence" value="ECO:0007669"/>
    <property type="project" value="UniProtKB-SubCell"/>
</dbReference>
<dbReference type="GO" id="GO:0055085">
    <property type="term" value="P:transmembrane transport"/>
    <property type="evidence" value="ECO:0007669"/>
    <property type="project" value="InterPro"/>
</dbReference>
<dbReference type="InterPro" id="IPR004680">
    <property type="entry name" value="Cit_transptr-like_dom"/>
</dbReference>
<dbReference type="PANTHER" id="PTHR43302">
    <property type="entry name" value="TRANSPORTER ARSB-RELATED"/>
    <property type="match status" value="1"/>
</dbReference>
<dbReference type="PANTHER" id="PTHR43302:SF5">
    <property type="entry name" value="TRANSPORTER ARSB-RELATED"/>
    <property type="match status" value="1"/>
</dbReference>
<dbReference type="Pfam" id="PF03600">
    <property type="entry name" value="CitMHS"/>
    <property type="match status" value="1"/>
</dbReference>
<gene>
    <name type="ordered locus">MJ0456</name>
</gene>
<name>Y456_METJA</name>
<proteinExistence type="inferred from homology"/>
<organism>
    <name type="scientific">Methanocaldococcus jannaschii (strain ATCC 43067 / DSM 2661 / JAL-1 / JCM 10045 / NBRC 100440)</name>
    <name type="common">Methanococcus jannaschii</name>
    <dbReference type="NCBI Taxonomy" id="243232"/>
    <lineage>
        <taxon>Archaea</taxon>
        <taxon>Methanobacteriati</taxon>
        <taxon>Methanobacteriota</taxon>
        <taxon>Methanomada group</taxon>
        <taxon>Methanococci</taxon>
        <taxon>Methanococcales</taxon>
        <taxon>Methanocaldococcaceae</taxon>
        <taxon>Methanocaldococcus</taxon>
    </lineage>
</organism>
<comment type="subcellular location">
    <subcellularLocation>
        <location evidence="2">Cell membrane</location>
        <topology evidence="2">Multi-pass membrane protein</topology>
    </subcellularLocation>
</comment>
<comment type="similarity">
    <text evidence="2">Belongs to the CitM (TC 2.A.11) transporter family.</text>
</comment>
<sequence>MKIDTFIFLMFISIGILLLLLNIINPMEVFHIVEWKTIFSLFYLMVIINIMRDTKFLDYISLKILKKSKRIFIALIFLTLFLSSLITNDVSLFVIIPLTLIIHRYTNMPFKDLEKLIIFEGVSANIGSGLTPIGNPQNLFLFHFYNIGTLEFIINMIPFEIFGILAILPFLEFKKYDTKINIDIKFKKEWIFYILSFILVLLCVFGYLNFIYILPLILAILMYKRVKVDYLFLLTFIFLFVDIEGLKRIGIINIFSIKCGNVMLMIYASLLSQIISNVPATVLLSHLYKNWLPIAYGVNIGGNGTLIASFANLITLRLSNGNVRVGRFLLIGGIIYIMHLIVLVAYAKIFWV</sequence>
<feature type="chain" id="PRO_0000106885" description="Uncharacterized transporter MJ0456">
    <location>
        <begin position="1"/>
        <end position="352"/>
    </location>
</feature>
<feature type="transmembrane region" description="Helical" evidence="1">
    <location>
        <begin position="6"/>
        <end position="26"/>
    </location>
</feature>
<feature type="transmembrane region" description="Helical" evidence="1">
    <location>
        <begin position="30"/>
        <end position="50"/>
    </location>
</feature>
<feature type="transmembrane region" description="Helical" evidence="1">
    <location>
        <begin position="76"/>
        <end position="96"/>
    </location>
</feature>
<feature type="transmembrane region" description="Helical" evidence="1">
    <location>
        <begin position="151"/>
        <end position="171"/>
    </location>
</feature>
<feature type="transmembrane region" description="Helical" evidence="1">
    <location>
        <begin position="197"/>
        <end position="217"/>
    </location>
</feature>
<feature type="transmembrane region" description="Helical" evidence="1">
    <location>
        <begin position="226"/>
        <end position="246"/>
    </location>
</feature>
<feature type="transmembrane region" description="Helical" evidence="1">
    <location>
        <begin position="291"/>
        <end position="311"/>
    </location>
</feature>
<feature type="transmembrane region" description="Helical" evidence="1">
    <location>
        <begin position="330"/>
        <end position="350"/>
    </location>
</feature>